<organism>
    <name type="scientific">Francisella tularensis subsp. tularensis (strain SCHU S4 / Schu 4)</name>
    <dbReference type="NCBI Taxonomy" id="177416"/>
    <lineage>
        <taxon>Bacteria</taxon>
        <taxon>Pseudomonadati</taxon>
        <taxon>Pseudomonadota</taxon>
        <taxon>Gammaproteobacteria</taxon>
        <taxon>Thiotrichales</taxon>
        <taxon>Francisellaceae</taxon>
        <taxon>Francisella</taxon>
    </lineage>
</organism>
<keyword id="KW-0030">Aminoacyl-tRNA synthetase</keyword>
<keyword id="KW-0067">ATP-binding</keyword>
<keyword id="KW-0963">Cytoplasm</keyword>
<keyword id="KW-0436">Ligase</keyword>
<keyword id="KW-0479">Metal-binding</keyword>
<keyword id="KW-0547">Nucleotide-binding</keyword>
<keyword id="KW-0648">Protein biosynthesis</keyword>
<keyword id="KW-1185">Reference proteome</keyword>
<keyword id="KW-0694">RNA-binding</keyword>
<keyword id="KW-0820">tRNA-binding</keyword>
<keyword id="KW-0862">Zinc</keyword>
<comment type="function">
    <text evidence="1">Catalyzes the attachment of alanine to tRNA(Ala) in a two-step reaction: alanine is first activated by ATP to form Ala-AMP and then transferred to the acceptor end of tRNA(Ala). Also edits incorrectly charged Ser-tRNA(Ala) and Gly-tRNA(Ala) via its editing domain.</text>
</comment>
<comment type="catalytic activity">
    <reaction evidence="1">
        <text>tRNA(Ala) + L-alanine + ATP = L-alanyl-tRNA(Ala) + AMP + diphosphate</text>
        <dbReference type="Rhea" id="RHEA:12540"/>
        <dbReference type="Rhea" id="RHEA-COMP:9657"/>
        <dbReference type="Rhea" id="RHEA-COMP:9923"/>
        <dbReference type="ChEBI" id="CHEBI:30616"/>
        <dbReference type="ChEBI" id="CHEBI:33019"/>
        <dbReference type="ChEBI" id="CHEBI:57972"/>
        <dbReference type="ChEBI" id="CHEBI:78442"/>
        <dbReference type="ChEBI" id="CHEBI:78497"/>
        <dbReference type="ChEBI" id="CHEBI:456215"/>
        <dbReference type="EC" id="6.1.1.7"/>
    </reaction>
</comment>
<comment type="cofactor">
    <cofactor evidence="1">
        <name>Zn(2+)</name>
        <dbReference type="ChEBI" id="CHEBI:29105"/>
    </cofactor>
    <text evidence="1">Binds 1 zinc ion per subunit.</text>
</comment>
<comment type="subcellular location">
    <subcellularLocation>
        <location evidence="1">Cytoplasm</location>
    </subcellularLocation>
</comment>
<comment type="domain">
    <text evidence="1">Consists of three domains; the N-terminal catalytic domain, the editing domain and the C-terminal C-Ala domain. The editing domain removes incorrectly charged amino acids, while the C-Ala domain, along with tRNA(Ala), serves as a bridge to cooperatively bring together the editing and aminoacylation centers thus stimulating deacylation of misacylated tRNAs.</text>
</comment>
<comment type="similarity">
    <text evidence="1">Belongs to the class-II aminoacyl-tRNA synthetase family.</text>
</comment>
<accession>Q5NFW7</accession>
<name>SYA_FRATT</name>
<dbReference type="EC" id="6.1.1.7" evidence="1"/>
<dbReference type="EMBL" id="AJ749949">
    <property type="protein sequence ID" value="CAG45729.1"/>
    <property type="molecule type" value="Genomic_DNA"/>
</dbReference>
<dbReference type="RefSeq" id="WP_011242268.1">
    <property type="nucleotide sequence ID" value="NZ_CP010290.1"/>
</dbReference>
<dbReference type="RefSeq" id="YP_170075.1">
    <property type="nucleotide sequence ID" value="NC_006570.2"/>
</dbReference>
<dbReference type="SMR" id="Q5NFW7"/>
<dbReference type="IntAct" id="Q5NFW7">
    <property type="interactions" value="7"/>
</dbReference>
<dbReference type="STRING" id="177416.FTT_1096c"/>
<dbReference type="DNASU" id="3192392"/>
<dbReference type="EnsemblBacteria" id="CAG45729">
    <property type="protein sequence ID" value="CAG45729"/>
    <property type="gene ID" value="FTT_1096c"/>
</dbReference>
<dbReference type="KEGG" id="ftu:FTT_1096c"/>
<dbReference type="eggNOG" id="COG0013">
    <property type="taxonomic scope" value="Bacteria"/>
</dbReference>
<dbReference type="OrthoDB" id="9803884at2"/>
<dbReference type="Proteomes" id="UP000001174">
    <property type="component" value="Chromosome"/>
</dbReference>
<dbReference type="GO" id="GO:0005829">
    <property type="term" value="C:cytosol"/>
    <property type="evidence" value="ECO:0007669"/>
    <property type="project" value="TreeGrafter"/>
</dbReference>
<dbReference type="GO" id="GO:0004813">
    <property type="term" value="F:alanine-tRNA ligase activity"/>
    <property type="evidence" value="ECO:0007669"/>
    <property type="project" value="UniProtKB-UniRule"/>
</dbReference>
<dbReference type="GO" id="GO:0002161">
    <property type="term" value="F:aminoacyl-tRNA deacylase activity"/>
    <property type="evidence" value="ECO:0007669"/>
    <property type="project" value="TreeGrafter"/>
</dbReference>
<dbReference type="GO" id="GO:0005524">
    <property type="term" value="F:ATP binding"/>
    <property type="evidence" value="ECO:0007669"/>
    <property type="project" value="UniProtKB-UniRule"/>
</dbReference>
<dbReference type="GO" id="GO:0000049">
    <property type="term" value="F:tRNA binding"/>
    <property type="evidence" value="ECO:0007669"/>
    <property type="project" value="UniProtKB-KW"/>
</dbReference>
<dbReference type="GO" id="GO:0008270">
    <property type="term" value="F:zinc ion binding"/>
    <property type="evidence" value="ECO:0007669"/>
    <property type="project" value="UniProtKB-UniRule"/>
</dbReference>
<dbReference type="GO" id="GO:0006419">
    <property type="term" value="P:alanyl-tRNA aminoacylation"/>
    <property type="evidence" value="ECO:0007669"/>
    <property type="project" value="UniProtKB-UniRule"/>
</dbReference>
<dbReference type="GO" id="GO:0045892">
    <property type="term" value="P:negative regulation of DNA-templated transcription"/>
    <property type="evidence" value="ECO:0007669"/>
    <property type="project" value="TreeGrafter"/>
</dbReference>
<dbReference type="CDD" id="cd00673">
    <property type="entry name" value="AlaRS_core"/>
    <property type="match status" value="1"/>
</dbReference>
<dbReference type="FunFam" id="2.40.30.130:FF:000001">
    <property type="entry name" value="Alanine--tRNA ligase"/>
    <property type="match status" value="1"/>
</dbReference>
<dbReference type="FunFam" id="3.10.310.40:FF:000001">
    <property type="entry name" value="Alanine--tRNA ligase"/>
    <property type="match status" value="1"/>
</dbReference>
<dbReference type="FunFam" id="3.30.54.20:FF:000001">
    <property type="entry name" value="Alanine--tRNA ligase"/>
    <property type="match status" value="1"/>
</dbReference>
<dbReference type="FunFam" id="3.30.930.10:FF:000004">
    <property type="entry name" value="Alanine--tRNA ligase"/>
    <property type="match status" value="1"/>
</dbReference>
<dbReference type="FunFam" id="3.30.980.10:FF:000004">
    <property type="entry name" value="Alanine--tRNA ligase, cytoplasmic"/>
    <property type="match status" value="1"/>
</dbReference>
<dbReference type="Gene3D" id="2.40.30.130">
    <property type="match status" value="1"/>
</dbReference>
<dbReference type="Gene3D" id="3.10.310.40">
    <property type="match status" value="1"/>
</dbReference>
<dbReference type="Gene3D" id="3.30.54.20">
    <property type="match status" value="1"/>
</dbReference>
<dbReference type="Gene3D" id="6.10.250.550">
    <property type="match status" value="1"/>
</dbReference>
<dbReference type="Gene3D" id="3.30.930.10">
    <property type="entry name" value="Bira Bifunctional Protein, Domain 2"/>
    <property type="match status" value="1"/>
</dbReference>
<dbReference type="Gene3D" id="3.30.980.10">
    <property type="entry name" value="Threonyl-trna Synthetase, Chain A, domain 2"/>
    <property type="match status" value="1"/>
</dbReference>
<dbReference type="HAMAP" id="MF_00036_B">
    <property type="entry name" value="Ala_tRNA_synth_B"/>
    <property type="match status" value="1"/>
</dbReference>
<dbReference type="InterPro" id="IPR045864">
    <property type="entry name" value="aa-tRNA-synth_II/BPL/LPL"/>
</dbReference>
<dbReference type="InterPro" id="IPR002318">
    <property type="entry name" value="Ala-tRNA-lgiase_IIc"/>
</dbReference>
<dbReference type="InterPro" id="IPR018162">
    <property type="entry name" value="Ala-tRNA-ligase_IIc_anticod-bd"/>
</dbReference>
<dbReference type="InterPro" id="IPR018165">
    <property type="entry name" value="Ala-tRNA-synth_IIc_core"/>
</dbReference>
<dbReference type="InterPro" id="IPR018164">
    <property type="entry name" value="Ala-tRNA-synth_IIc_N"/>
</dbReference>
<dbReference type="InterPro" id="IPR050058">
    <property type="entry name" value="Ala-tRNA_ligase"/>
</dbReference>
<dbReference type="InterPro" id="IPR023033">
    <property type="entry name" value="Ala_tRNA_ligase_euk/bac"/>
</dbReference>
<dbReference type="InterPro" id="IPR003156">
    <property type="entry name" value="DHHA1_dom"/>
</dbReference>
<dbReference type="InterPro" id="IPR018163">
    <property type="entry name" value="Thr/Ala-tRNA-synth_IIc_edit"/>
</dbReference>
<dbReference type="InterPro" id="IPR009000">
    <property type="entry name" value="Transl_B-barrel_sf"/>
</dbReference>
<dbReference type="InterPro" id="IPR012947">
    <property type="entry name" value="tRNA_SAD"/>
</dbReference>
<dbReference type="NCBIfam" id="TIGR00344">
    <property type="entry name" value="alaS"/>
    <property type="match status" value="1"/>
</dbReference>
<dbReference type="PANTHER" id="PTHR11777:SF9">
    <property type="entry name" value="ALANINE--TRNA LIGASE, CYTOPLASMIC"/>
    <property type="match status" value="1"/>
</dbReference>
<dbReference type="PANTHER" id="PTHR11777">
    <property type="entry name" value="ALANYL-TRNA SYNTHETASE"/>
    <property type="match status" value="1"/>
</dbReference>
<dbReference type="Pfam" id="PF02272">
    <property type="entry name" value="DHHA1"/>
    <property type="match status" value="1"/>
</dbReference>
<dbReference type="Pfam" id="PF01411">
    <property type="entry name" value="tRNA-synt_2c"/>
    <property type="match status" value="1"/>
</dbReference>
<dbReference type="Pfam" id="PF07973">
    <property type="entry name" value="tRNA_SAD"/>
    <property type="match status" value="1"/>
</dbReference>
<dbReference type="PRINTS" id="PR00980">
    <property type="entry name" value="TRNASYNTHALA"/>
</dbReference>
<dbReference type="SMART" id="SM00863">
    <property type="entry name" value="tRNA_SAD"/>
    <property type="match status" value="1"/>
</dbReference>
<dbReference type="SUPFAM" id="SSF55681">
    <property type="entry name" value="Class II aaRS and biotin synthetases"/>
    <property type="match status" value="1"/>
</dbReference>
<dbReference type="SUPFAM" id="SSF101353">
    <property type="entry name" value="Putative anticodon-binding domain of alanyl-tRNA synthetase (AlaRS)"/>
    <property type="match status" value="1"/>
</dbReference>
<dbReference type="SUPFAM" id="SSF55186">
    <property type="entry name" value="ThrRS/AlaRS common domain"/>
    <property type="match status" value="1"/>
</dbReference>
<dbReference type="SUPFAM" id="SSF50447">
    <property type="entry name" value="Translation proteins"/>
    <property type="match status" value="1"/>
</dbReference>
<dbReference type="PROSITE" id="PS50860">
    <property type="entry name" value="AA_TRNA_LIGASE_II_ALA"/>
    <property type="match status" value="1"/>
</dbReference>
<proteinExistence type="inferred from homology"/>
<reference key="1">
    <citation type="journal article" date="2005" name="Nat. Genet.">
        <title>The complete genome sequence of Francisella tularensis, the causative agent of tularemia.</title>
        <authorList>
            <person name="Larsson P."/>
            <person name="Oyston P.C.F."/>
            <person name="Chain P."/>
            <person name="Chu M.C."/>
            <person name="Duffield M."/>
            <person name="Fuxelius H.-H."/>
            <person name="Garcia E."/>
            <person name="Haelltorp G."/>
            <person name="Johansson D."/>
            <person name="Isherwood K.E."/>
            <person name="Karp P.D."/>
            <person name="Larsson E."/>
            <person name="Liu Y."/>
            <person name="Michell S."/>
            <person name="Prior J."/>
            <person name="Prior R."/>
            <person name="Malfatti S."/>
            <person name="Sjoestedt A."/>
            <person name="Svensson K."/>
            <person name="Thompson N."/>
            <person name="Vergez L."/>
            <person name="Wagg J.K."/>
            <person name="Wren B.W."/>
            <person name="Lindler L.E."/>
            <person name="Andersson S.G.E."/>
            <person name="Forsman M."/>
            <person name="Titball R.W."/>
        </authorList>
    </citation>
    <scope>NUCLEOTIDE SEQUENCE [LARGE SCALE GENOMIC DNA]</scope>
    <source>
        <strain>SCHU S4 / Schu 4</strain>
    </source>
</reference>
<gene>
    <name evidence="1" type="primary">alaS</name>
    <name type="ordered locus">FTT_1096c</name>
</gene>
<sequence length="865" mass="96060">MITTKELRNKFINYFESKNHSHQPSSSLIPFGDDTLLFTNAGMVQFKDVFLGIEKKDFSRAVTVQKCLRAGGKHNDLDNVGYTARHHTFFEMLGNFSFGDYFKKEAISFAWEFLTKEIKLPVEKLWVTIYASDDEAFDVWHKHIGLAKERIIRIDSSDNFWSMGDTGPCGPCTEIFYDHGEDVAGGLPGTPEQDGDRYIEIWNIVFMQYNRHADGSTTDLPKPSVDTGMGLERISAVLQNVHSNYEIDLFQALIKKAQQVTHAKDINSPSLKVIADHIRACAFLIADGVLPANEGRGYVLRRIIRRAIRHGNKVGAKEIFFYKLVAELVSQMGEVYSQLIDKRELIEKTLIKEEELFLKTIENGIKIFDAEIENLKDNTISGEVAFKLYDTYGFPFDLTADMAREKGLKVDEQAFLAQMQIQKQRSKEAGKFNVDYNSLINSQVKSEFRGYSTLIEDAKVLEIYQDGQLVASTSEQVSAVVVLDKTPFYAESGGQVGDKGILEGIGFEFVVEDVQKSGEAILHIGKLVKGHLNLNDELTARVSDKPRLATAANHSATHLLHKALKLVLGGHAEQKGSLVDENRLRFDFTHDKAISRSKIEQIELLVNQQIRANYPVTTIETSQQKAKSLGAEALFGEKYGDIVRVISMGDFSIELCGGTHVAYTGDIGLFKVTSEGSIASGVRRIEAVTADKAIRHTFTNENKIIAIKDSLKANDTNLIDKIKSMLEQIKNQEKQIAKLKKELLSGSSNDIKETNIGDIKVVVANVDGVDVKTLRNKIDDYKSKNTKVIAVLTTTNADKVQFVIGVSNALTTLIKAGDIAKELSSHIDGKGGGRADMAQGGGNNSANIDQALSQVEKFILNNIKE</sequence>
<feature type="chain" id="PRO_0000075115" description="Alanine--tRNA ligase">
    <location>
        <begin position="1"/>
        <end position="865"/>
    </location>
</feature>
<feature type="binding site" evidence="1">
    <location>
        <position position="554"/>
    </location>
    <ligand>
        <name>Zn(2+)</name>
        <dbReference type="ChEBI" id="CHEBI:29105"/>
    </ligand>
</feature>
<feature type="binding site" evidence="1">
    <location>
        <position position="558"/>
    </location>
    <ligand>
        <name>Zn(2+)</name>
        <dbReference type="ChEBI" id="CHEBI:29105"/>
    </ligand>
</feature>
<feature type="binding site" evidence="1">
    <location>
        <position position="656"/>
    </location>
    <ligand>
        <name>Zn(2+)</name>
        <dbReference type="ChEBI" id="CHEBI:29105"/>
    </ligand>
</feature>
<feature type="binding site" evidence="1">
    <location>
        <position position="660"/>
    </location>
    <ligand>
        <name>Zn(2+)</name>
        <dbReference type="ChEBI" id="CHEBI:29105"/>
    </ligand>
</feature>
<evidence type="ECO:0000255" key="1">
    <source>
        <dbReference type="HAMAP-Rule" id="MF_00036"/>
    </source>
</evidence>
<protein>
    <recommendedName>
        <fullName evidence="1">Alanine--tRNA ligase</fullName>
        <ecNumber evidence="1">6.1.1.7</ecNumber>
    </recommendedName>
    <alternativeName>
        <fullName evidence="1">Alanyl-tRNA synthetase</fullName>
        <shortName evidence="1">AlaRS</shortName>
    </alternativeName>
</protein>